<gene>
    <name type="primary">SNP1</name>
    <name type="ordered locus">YIL061C</name>
</gene>
<sequence>MNYNLSKYPDDVSRLFKPRPPLSYKRPTDYPYAKRQTNPNITGVANLLSTSLKHYMEEFPEGSPNNHLQRYEDIKLSKIKNAQLLDRRLQNWNPNVDPHIKDTDPYRTIFIGRLPYDLDEIELQKYFVKFGEIEKIRIVKDKITQKSKGYAFIVFKDPISSKMAFKEIGVHRGIQIKDRICIVDIERGRTVKYFKPRRLGGGLGGRGYSNRDSRLPGRFASASTSNPAERNYAPRLPRRETSSSAYSADRYGSSTLDARYRGNRPLLSAATPTAAVTSVYKSRNSRTRESQPAPKEAPDY</sequence>
<feature type="chain" id="PRO_0000081886" description="U1 small nuclear ribonucleoprotein 70 kDa homolog">
    <location>
        <begin position="1"/>
        <end position="300"/>
    </location>
</feature>
<feature type="domain" description="RRM" evidence="2">
    <location>
        <begin position="107"/>
        <end position="198"/>
    </location>
</feature>
<feature type="region of interest" description="Disordered" evidence="3">
    <location>
        <begin position="204"/>
        <end position="248"/>
    </location>
</feature>
<feature type="region of interest" description="Disordered" evidence="3">
    <location>
        <begin position="263"/>
        <end position="300"/>
    </location>
</feature>
<feature type="compositionally biased region" description="Low complexity" evidence="3">
    <location>
        <begin position="265"/>
        <end position="279"/>
    </location>
</feature>
<feature type="mutagenesis site" description="Severely temperature-sensitive. Defective in pre-mRNA splicing." evidence="8">
    <location>
        <begin position="18"/>
        <end position="98"/>
    </location>
</feature>
<feature type="mutagenesis site" description="Fails to complement the growth and splicing defective, temperature-sensitive phenotype of the null allele at 30 degrees Celsius. No association with U1 snRNP." evidence="9">
    <location>
        <begin position="18"/>
        <end position="93"/>
    </location>
</feature>
<feature type="mutagenesis site" description="Associates with U1 snRNP." evidence="8 9">
    <location>
        <begin position="92"/>
        <end position="248"/>
    </location>
</feature>
<feature type="mutagenesis site" description="No splicing defects. Associates with U1 snRNP; when associated with T-150 and L-152." evidence="8 9">
    <original>K</original>
    <variation>L</variation>
    <location>
        <position position="148"/>
    </location>
</feature>
<feature type="mutagenesis site" description="No splicing defects. Associates with U1 snRNP; when associated with L-148 and L-152." evidence="8 9">
    <original>Y</original>
    <variation>T</variation>
    <location>
        <position position="150"/>
    </location>
</feature>
<feature type="mutagenesis site" description="No splicing defects. Associates with U1 snRNP; when associated with L-148 and T-150." evidence="8 9">
    <original>F</original>
    <variation>L</variation>
    <location>
        <position position="152"/>
    </location>
</feature>
<feature type="strand" evidence="13">
    <location>
        <begin position="6"/>
        <end position="8"/>
    </location>
</feature>
<feature type="helix" evidence="13">
    <location>
        <begin position="10"/>
        <end position="15"/>
    </location>
</feature>
<feature type="helix" evidence="13">
    <location>
        <begin position="32"/>
        <end position="34"/>
    </location>
</feature>
<feature type="helix" evidence="13">
    <location>
        <begin position="45"/>
        <end position="58"/>
    </location>
</feature>
<feature type="helix" evidence="13">
    <location>
        <begin position="66"/>
        <end position="90"/>
    </location>
</feature>
<feature type="strand" evidence="12">
    <location>
        <begin position="96"/>
        <end position="100"/>
    </location>
</feature>
<feature type="strand" evidence="13">
    <location>
        <begin position="107"/>
        <end position="113"/>
    </location>
</feature>
<feature type="helix" evidence="13">
    <location>
        <begin position="121"/>
        <end position="128"/>
    </location>
</feature>
<feature type="strand" evidence="13">
    <location>
        <begin position="133"/>
        <end position="140"/>
    </location>
</feature>
<feature type="strand" evidence="13">
    <location>
        <begin position="142"/>
        <end position="144"/>
    </location>
</feature>
<feature type="strand" evidence="13">
    <location>
        <begin position="147"/>
        <end position="156"/>
    </location>
</feature>
<feature type="helix" evidence="13">
    <location>
        <begin position="158"/>
        <end position="170"/>
    </location>
</feature>
<feature type="strand" evidence="13">
    <location>
        <begin position="173"/>
        <end position="175"/>
    </location>
</feature>
<feature type="strand" evidence="13">
    <location>
        <begin position="177"/>
        <end position="185"/>
    </location>
</feature>
<name>RU17_YEAST</name>
<accession>Q00916</accession>
<accession>D6VVM3</accession>
<keyword id="KW-0002">3D-structure</keyword>
<keyword id="KW-0507">mRNA processing</keyword>
<keyword id="KW-0508">mRNA splicing</keyword>
<keyword id="KW-0539">Nucleus</keyword>
<keyword id="KW-1185">Reference proteome</keyword>
<keyword id="KW-0687">Ribonucleoprotein</keyword>
<keyword id="KW-0694">RNA-binding</keyword>
<keyword id="KW-0747">Spliceosome</keyword>
<protein>
    <recommendedName>
        <fullName>U1 small nuclear ribonucleoprotein 70 kDa homolog</fullName>
        <shortName>U1 70K</shortName>
        <shortName>U1 snRNP 70 kDa homolog</shortName>
        <shortName>U1-70K</shortName>
    </recommendedName>
    <alternativeName>
        <fullName>U1 small nuclear ribonucleoprotein SNP1</fullName>
        <shortName>U1 snRNP protein SNP1</shortName>
    </alternativeName>
</protein>
<proteinExistence type="evidence at protein level"/>
<evidence type="ECO:0000250" key="1"/>
<evidence type="ECO:0000255" key="2">
    <source>
        <dbReference type="PROSITE-ProRule" id="PRU00176"/>
    </source>
</evidence>
<evidence type="ECO:0000256" key="3">
    <source>
        <dbReference type="SAM" id="MobiDB-lite"/>
    </source>
</evidence>
<evidence type="ECO:0000269" key="4">
    <source>
    </source>
</evidence>
<evidence type="ECO:0000269" key="5">
    <source>
    </source>
</evidence>
<evidence type="ECO:0000269" key="6">
    <source>
    </source>
</evidence>
<evidence type="ECO:0000269" key="7">
    <source>
    </source>
</evidence>
<evidence type="ECO:0000269" key="8">
    <source>
    </source>
</evidence>
<evidence type="ECO:0000269" key="9">
    <source>
    </source>
</evidence>
<evidence type="ECO:0000269" key="10">
    <source>
    </source>
</evidence>
<evidence type="ECO:0000269" key="11">
    <source>
    </source>
</evidence>
<evidence type="ECO:0007829" key="12">
    <source>
        <dbReference type="PDB" id="5ZWN"/>
    </source>
</evidence>
<evidence type="ECO:0007829" key="13">
    <source>
        <dbReference type="PDB" id="6N7R"/>
    </source>
</evidence>
<dbReference type="EMBL" id="Z38060">
    <property type="protein sequence ID" value="CAA86162.1"/>
    <property type="molecule type" value="Genomic_DNA"/>
</dbReference>
<dbReference type="EMBL" id="X59986">
    <property type="protein sequence ID" value="CAA42602.1"/>
    <property type="molecule type" value="Genomic_DNA"/>
</dbReference>
<dbReference type="EMBL" id="AY558085">
    <property type="protein sequence ID" value="AAS56411.1"/>
    <property type="molecule type" value="Genomic_DNA"/>
</dbReference>
<dbReference type="EMBL" id="BK006942">
    <property type="protein sequence ID" value="DAA08489.1"/>
    <property type="molecule type" value="Genomic_DNA"/>
</dbReference>
<dbReference type="PIR" id="S16815">
    <property type="entry name" value="S16815"/>
</dbReference>
<dbReference type="RefSeq" id="NP_012203.1">
    <property type="nucleotide sequence ID" value="NM_001179411.1"/>
</dbReference>
<dbReference type="PDB" id="5ZWN">
    <property type="method" value="EM"/>
    <property type="resolution" value="3.30 A"/>
    <property type="chains" value="Q=1-300"/>
</dbReference>
<dbReference type="PDB" id="6G90">
    <property type="method" value="EM"/>
    <property type="resolution" value="4.00 A"/>
    <property type="chains" value="B=1-300"/>
</dbReference>
<dbReference type="PDB" id="6N7P">
    <property type="method" value="EM"/>
    <property type="resolution" value="3.60 A"/>
    <property type="chains" value="A=1-300"/>
</dbReference>
<dbReference type="PDB" id="6N7R">
    <property type="method" value="EM"/>
    <property type="resolution" value="3.20 A"/>
    <property type="chains" value="A=1-300"/>
</dbReference>
<dbReference type="PDB" id="6N7X">
    <property type="method" value="EM"/>
    <property type="resolution" value="3.60 A"/>
    <property type="chains" value="A=1-300"/>
</dbReference>
<dbReference type="PDB" id="7OQC">
    <property type="method" value="EM"/>
    <property type="resolution" value="4.10 A"/>
    <property type="chains" value="B=1-300"/>
</dbReference>
<dbReference type="PDB" id="7OQE">
    <property type="method" value="EM"/>
    <property type="resolution" value="5.90 A"/>
    <property type="chains" value="B=1-300"/>
</dbReference>
<dbReference type="PDB" id="8W2O">
    <property type="method" value="EM"/>
    <property type="resolution" value="3.49 A"/>
    <property type="chains" value="A=1-300"/>
</dbReference>
<dbReference type="PDBsum" id="5ZWN"/>
<dbReference type="PDBsum" id="6G90"/>
<dbReference type="PDBsum" id="6N7P"/>
<dbReference type="PDBsum" id="6N7R"/>
<dbReference type="PDBsum" id="6N7X"/>
<dbReference type="PDBsum" id="7OQC"/>
<dbReference type="PDBsum" id="7OQE"/>
<dbReference type="PDBsum" id="8W2O"/>
<dbReference type="EMDB" id="EMD-0360"/>
<dbReference type="EMDB" id="EMD-0361"/>
<dbReference type="EMDB" id="EMD-13029"/>
<dbReference type="EMDB" id="EMD-13033"/>
<dbReference type="EMDB" id="EMD-4364"/>
<dbReference type="EMDB" id="EMD-43753"/>
<dbReference type="EMDB" id="EMD-6973"/>
<dbReference type="EMDB" id="EMD-8622"/>
<dbReference type="SMR" id="Q00916"/>
<dbReference type="BioGRID" id="34931">
    <property type="interactions" value="96"/>
</dbReference>
<dbReference type="ComplexPortal" id="CPX-23">
    <property type="entry name" value="U1 small nuclear ribonucleoprotein complex"/>
</dbReference>
<dbReference type="DIP" id="DIP-663N"/>
<dbReference type="FunCoup" id="Q00916">
    <property type="interactions" value="546"/>
</dbReference>
<dbReference type="IntAct" id="Q00916">
    <property type="interactions" value="53"/>
</dbReference>
<dbReference type="MINT" id="Q00916"/>
<dbReference type="STRING" id="4932.YIL061C"/>
<dbReference type="GlyGen" id="Q00916">
    <property type="glycosylation" value="1 site"/>
</dbReference>
<dbReference type="iPTMnet" id="Q00916"/>
<dbReference type="PaxDb" id="4932-YIL061C"/>
<dbReference type="PeptideAtlas" id="Q00916"/>
<dbReference type="EnsemblFungi" id="YIL061C_mRNA">
    <property type="protein sequence ID" value="YIL061C"/>
    <property type="gene ID" value="YIL061C"/>
</dbReference>
<dbReference type="GeneID" id="854749"/>
<dbReference type="KEGG" id="sce:YIL061C"/>
<dbReference type="AGR" id="SGD:S000001323"/>
<dbReference type="SGD" id="S000001323">
    <property type="gene designation" value="SNP1"/>
</dbReference>
<dbReference type="VEuPathDB" id="FungiDB:YIL061C"/>
<dbReference type="eggNOG" id="KOG0113">
    <property type="taxonomic scope" value="Eukaryota"/>
</dbReference>
<dbReference type="GeneTree" id="ENSGT00940000160292"/>
<dbReference type="HOGENOM" id="CLU_045151_4_1_1"/>
<dbReference type="InParanoid" id="Q00916"/>
<dbReference type="OMA" id="PPKFYDG"/>
<dbReference type="OrthoDB" id="4207594at2759"/>
<dbReference type="BioCyc" id="YEAST:G3O-31329-MONOMER"/>
<dbReference type="BioGRID-ORCS" id="854749">
    <property type="hits" value="1 hit in 10 CRISPR screens"/>
</dbReference>
<dbReference type="PRO" id="PR:Q00916"/>
<dbReference type="Proteomes" id="UP000002311">
    <property type="component" value="Chromosome IX"/>
</dbReference>
<dbReference type="RNAct" id="Q00916">
    <property type="molecule type" value="protein"/>
</dbReference>
<dbReference type="GO" id="GO:0000243">
    <property type="term" value="C:commitment complex"/>
    <property type="evidence" value="ECO:0000353"/>
    <property type="project" value="SGD"/>
</dbReference>
<dbReference type="GO" id="GO:0005634">
    <property type="term" value="C:nucleus"/>
    <property type="evidence" value="ECO:0000303"/>
    <property type="project" value="ComplexPortal"/>
</dbReference>
<dbReference type="GO" id="GO:0005681">
    <property type="term" value="C:spliceosomal complex"/>
    <property type="evidence" value="ECO:0000303"/>
    <property type="project" value="ComplexPortal"/>
</dbReference>
<dbReference type="GO" id="GO:0005685">
    <property type="term" value="C:U1 snRNP"/>
    <property type="evidence" value="ECO:0000314"/>
    <property type="project" value="SGD"/>
</dbReference>
<dbReference type="GO" id="GO:0071004">
    <property type="term" value="C:U2-type prespliceosome"/>
    <property type="evidence" value="ECO:0000314"/>
    <property type="project" value="SGD"/>
</dbReference>
<dbReference type="GO" id="GO:0003729">
    <property type="term" value="F:mRNA binding"/>
    <property type="evidence" value="ECO:0000353"/>
    <property type="project" value="SGD"/>
</dbReference>
<dbReference type="GO" id="GO:0030619">
    <property type="term" value="F:U1 snRNA binding"/>
    <property type="evidence" value="ECO:0000353"/>
    <property type="project" value="SGD"/>
</dbReference>
<dbReference type="GO" id="GO:0000395">
    <property type="term" value="P:mRNA 5'-splice site recognition"/>
    <property type="evidence" value="ECO:0000303"/>
    <property type="project" value="ComplexPortal"/>
</dbReference>
<dbReference type="GO" id="GO:0000398">
    <property type="term" value="P:mRNA splicing, via spliceosome"/>
    <property type="evidence" value="ECO:0000353"/>
    <property type="project" value="SGD"/>
</dbReference>
<dbReference type="CDD" id="cd21615">
    <property type="entry name" value="RRM_SNP1_like"/>
    <property type="match status" value="1"/>
</dbReference>
<dbReference type="FunFam" id="3.30.70.330:FF:000853">
    <property type="entry name" value="U1 70K"/>
    <property type="match status" value="1"/>
</dbReference>
<dbReference type="Gene3D" id="3.30.70.330">
    <property type="match status" value="1"/>
</dbReference>
<dbReference type="InterPro" id="IPR012677">
    <property type="entry name" value="Nucleotide-bd_a/b_plait_sf"/>
</dbReference>
<dbReference type="InterPro" id="IPR035979">
    <property type="entry name" value="RBD_domain_sf"/>
</dbReference>
<dbReference type="InterPro" id="IPR000504">
    <property type="entry name" value="RRM_dom"/>
</dbReference>
<dbReference type="InterPro" id="IPR051183">
    <property type="entry name" value="U1_U11-U12_snRNP_70-35kDa"/>
</dbReference>
<dbReference type="InterPro" id="IPR022023">
    <property type="entry name" value="U1snRNP70_N"/>
</dbReference>
<dbReference type="PANTHER" id="PTHR13952">
    <property type="entry name" value="U1 SMALL NUCLEAR RIBONUCLEOPROTEIN 70 KD"/>
    <property type="match status" value="1"/>
</dbReference>
<dbReference type="PANTHER" id="PTHR13952:SF5">
    <property type="entry name" value="U1 SMALL NUCLEAR RIBONUCLEOPROTEIN 70 KDA"/>
    <property type="match status" value="1"/>
</dbReference>
<dbReference type="Pfam" id="PF00076">
    <property type="entry name" value="RRM_1"/>
    <property type="match status" value="1"/>
</dbReference>
<dbReference type="Pfam" id="PF12220">
    <property type="entry name" value="U1snRNP70_N"/>
    <property type="match status" value="1"/>
</dbReference>
<dbReference type="SMART" id="SM00360">
    <property type="entry name" value="RRM"/>
    <property type="match status" value="1"/>
</dbReference>
<dbReference type="SUPFAM" id="SSF54928">
    <property type="entry name" value="RNA-binding domain, RBD"/>
    <property type="match status" value="1"/>
</dbReference>
<dbReference type="PROSITE" id="PS50102">
    <property type="entry name" value="RRM"/>
    <property type="match status" value="1"/>
</dbReference>
<comment type="function">
    <text>Involved in nuclear mRNA splicing.</text>
</comment>
<comment type="subunit">
    <text evidence="4 5 6 10 11">Component of the spliceosome, where it is associated with snRNP U1. Binds stem loop I of U1 snRNA. Interacts with mRNA.</text>
</comment>
<comment type="interaction">
    <interactant intactId="EBI-724">
        <id>Q00916</id>
    </interactant>
    <interactant intactId="EBI-21567">
        <id>P38261</id>
        <label>EXO84</label>
    </interactant>
    <organismsDiffer>false</organismsDiffer>
    <experiments>2</experiments>
</comment>
<comment type="interaction">
    <interactant intactId="EBI-724">
        <id>Q00916</id>
    </interactant>
    <interactant intactId="EBI-465">
        <id>P33334</id>
        <label>PRP8</label>
    </interactant>
    <organismsDiffer>false</organismsDiffer>
    <experiments>3</experiments>
</comment>
<comment type="subcellular location">
    <subcellularLocation>
        <location evidence="1">Nucleus</location>
    </subcellularLocation>
</comment>
<comment type="miscellaneous">
    <text evidence="7">Present with 736 molecules/cell in log phase SD medium.</text>
</comment>
<reference key="1">
    <citation type="journal article" date="1991" name="EMBO J.">
        <title>Cloning of a yeast U1 snRNP 70K protein homologue: functional conservation of an RNA-binding domain between humans and yeast.</title>
        <authorList>
            <person name="Smith V."/>
            <person name="Barrell B.G."/>
        </authorList>
    </citation>
    <scope>NUCLEOTIDE SEQUENCE [GENOMIC DNA]</scope>
    <source>
        <strain>ATCC 204511 / S288c / AB972</strain>
    </source>
</reference>
<reference key="2">
    <citation type="journal article" date="1997" name="Nature">
        <title>The nucleotide sequence of Saccharomyces cerevisiae chromosome IX.</title>
        <authorList>
            <person name="Churcher C.M."/>
            <person name="Bowman S."/>
            <person name="Badcock K."/>
            <person name="Bankier A.T."/>
            <person name="Brown D."/>
            <person name="Chillingworth T."/>
            <person name="Connor R."/>
            <person name="Devlin K."/>
            <person name="Gentles S."/>
            <person name="Hamlin N."/>
            <person name="Harris D.E."/>
            <person name="Horsnell T."/>
            <person name="Hunt S."/>
            <person name="Jagels K."/>
            <person name="Jones M."/>
            <person name="Lye G."/>
            <person name="Moule S."/>
            <person name="Odell C."/>
            <person name="Pearson D."/>
            <person name="Rajandream M.A."/>
            <person name="Rice P."/>
            <person name="Rowley N."/>
            <person name="Skelton J."/>
            <person name="Smith V."/>
            <person name="Walsh S.V."/>
            <person name="Whitehead S."/>
            <person name="Barrell B.G."/>
        </authorList>
    </citation>
    <scope>NUCLEOTIDE SEQUENCE [LARGE SCALE GENOMIC DNA]</scope>
    <source>
        <strain>ATCC 204508 / S288c</strain>
    </source>
</reference>
<reference key="3">
    <citation type="journal article" date="2014" name="G3 (Bethesda)">
        <title>The reference genome sequence of Saccharomyces cerevisiae: Then and now.</title>
        <authorList>
            <person name="Engel S.R."/>
            <person name="Dietrich F.S."/>
            <person name="Fisk D.G."/>
            <person name="Binkley G."/>
            <person name="Balakrishnan R."/>
            <person name="Costanzo M.C."/>
            <person name="Dwight S.S."/>
            <person name="Hitz B.C."/>
            <person name="Karra K."/>
            <person name="Nash R.S."/>
            <person name="Weng S."/>
            <person name="Wong E.D."/>
            <person name="Lloyd P."/>
            <person name="Skrzypek M.S."/>
            <person name="Miyasato S.R."/>
            <person name="Simison M."/>
            <person name="Cherry J.M."/>
        </authorList>
    </citation>
    <scope>GENOME REANNOTATION</scope>
    <source>
        <strain>ATCC 204508 / S288c</strain>
    </source>
</reference>
<reference key="4">
    <citation type="journal article" date="2007" name="Genome Res.">
        <title>Approaching a complete repository of sequence-verified protein-encoding clones for Saccharomyces cerevisiae.</title>
        <authorList>
            <person name="Hu Y."/>
            <person name="Rolfs A."/>
            <person name="Bhullar B."/>
            <person name="Murthy T.V.S."/>
            <person name="Zhu C."/>
            <person name="Berger M.F."/>
            <person name="Camargo A.A."/>
            <person name="Kelley F."/>
            <person name="McCarron S."/>
            <person name="Jepson D."/>
            <person name="Richardson A."/>
            <person name="Raphael J."/>
            <person name="Moreira D."/>
            <person name="Taycher E."/>
            <person name="Zuo D."/>
            <person name="Mohr S."/>
            <person name="Kane M.F."/>
            <person name="Williamson J."/>
            <person name="Simpson A.J.G."/>
            <person name="Bulyk M.L."/>
            <person name="Harlow E."/>
            <person name="Marsischky G."/>
            <person name="Kolodner R.D."/>
            <person name="LaBaer J."/>
        </authorList>
    </citation>
    <scope>NUCLEOTIDE SEQUENCE [GENOMIC DNA]</scope>
    <source>
        <strain>ATCC 204508 / S288c</strain>
    </source>
</reference>
<reference key="5">
    <citation type="journal article" date="1992" name="Nucleic Acids Res.">
        <title>The yeast homolog of the U1 snRNP protein 70K is encoded by the SNP1 gene.</title>
        <authorList>
            <person name="Kao H.-Y."/>
            <person name="Siliciano P.G."/>
        </authorList>
    </citation>
    <scope>U1 RNA-BINDING</scope>
</reference>
<reference key="6">
    <citation type="journal article" date="1995" name="Mol. Cell. Biol.">
        <title>The amino-terminal domain of yeast U1-70K is necessary and sufficient for function.</title>
        <authorList>
            <person name="Hilleren P.J."/>
            <person name="Kao H.-Y."/>
            <person name="Siliciano P.G."/>
        </authorList>
    </citation>
    <scope>MUTAGENESIS OF 18-PRO--PRO-98; 92-TRP--ALA-248; LYS-148; TYR-150 AND PHE-152</scope>
</reference>
<reference key="7">
    <citation type="journal article" date="1995" name="Nucleic Acids Symp. Ser.">
        <title>The RRM domain is dispensable for yeast U1-70K function.</title>
        <authorList>
            <person name="Hilleren P.J."/>
            <person name="Kao H.-Y."/>
            <person name="Siliciano P.G."/>
        </authorList>
    </citation>
    <scope>MUTAGENESIS OF 18-PRO--ASN-93; 92-TRP--ALA-248; LYS-148; TYR-150 AND PHE-152</scope>
</reference>
<reference key="8">
    <citation type="journal article" date="1997" name="Proc. Natl. Acad. Sci. U.S.A.">
        <title>Identification of the proteins of the yeast U1 small nuclear ribonucleoprotein complex by mass spectrometry.</title>
        <authorList>
            <person name="Neubauer G."/>
            <person name="Gottschalk A."/>
            <person name="Fabrizio P."/>
            <person name="Seraphin B."/>
            <person name="Luehrmann R."/>
            <person name="Mann M."/>
        </authorList>
    </citation>
    <scope>IDENTIFICATION IN U1 SNRNP BY MASS SPECTROMETRY</scope>
</reference>
<reference key="9">
    <citation type="journal article" date="1998" name="RNA">
        <title>A comprehensive biochemical and genetic analysis of the yeast U1 snRNP reveals five novel proteins.</title>
        <authorList>
            <person name="Gottschalk A."/>
            <person name="Tang J."/>
            <person name="Puig O."/>
            <person name="Salgado J."/>
            <person name="Neubauer G."/>
            <person name="Colot H.V."/>
            <person name="Mann M."/>
            <person name="Seraphin B."/>
            <person name="Rosbash M."/>
            <person name="Luehrmann R."/>
            <person name="Fabrizio P."/>
        </authorList>
    </citation>
    <scope>IDENTIFICATION IN U1 SNRNP BY MASS SPECTROMETRY</scope>
</reference>
<reference key="10">
    <citation type="journal article" date="1999" name="Genes Dev.">
        <title>Identification of eight proteins that cross-link to pre-mRNA in the yeast commitment complex.</title>
        <authorList>
            <person name="Zhang D."/>
            <person name="Rosbash M."/>
        </authorList>
    </citation>
    <scope>INTERACTION WITH MRNA</scope>
</reference>
<reference key="11">
    <citation type="journal article" date="2001" name="J. Biol. Chem.">
        <title>New roles for the Snp1 and Exo84 proteins in yeast pre-mRNA splicing.</title>
        <authorList>
            <person name="Awasthi S."/>
            <person name="Palmer R."/>
            <person name="Castro M."/>
            <person name="Mobarak C.D."/>
            <person name="Ruby S.W."/>
        </authorList>
    </citation>
    <scope>INTERACTION WITH EXO84 AND PRP8</scope>
</reference>
<reference key="12">
    <citation type="journal article" date="2002" name="Mol. Cell">
        <title>Composition and functional characterization of the yeast spliceosomal penta-snRNP.</title>
        <authorList>
            <person name="Stevens S.W."/>
            <person name="Ryan D.E."/>
            <person name="Ge H.Y."/>
            <person name="Moore R.E."/>
            <person name="Young M.K."/>
            <person name="Lee T.D."/>
            <person name="Abelson J."/>
        </authorList>
    </citation>
    <scope>IDENTIFICATION IN U1.U2.U4/U6.U5 PENTA-SNRNP COMPLEX BY MASS SPECTROMETRY</scope>
</reference>
<reference key="13">
    <citation type="journal article" date="2003" name="Nature">
        <title>Global analysis of protein expression in yeast.</title>
        <authorList>
            <person name="Ghaemmaghami S."/>
            <person name="Huh W.-K."/>
            <person name="Bower K."/>
            <person name="Howson R.W."/>
            <person name="Belle A."/>
            <person name="Dephoure N."/>
            <person name="O'Shea E.K."/>
            <person name="Weissman J.S."/>
        </authorList>
    </citation>
    <scope>LEVEL OF PROTEIN EXPRESSION [LARGE SCALE ANALYSIS]</scope>
</reference>
<organism>
    <name type="scientific">Saccharomyces cerevisiae (strain ATCC 204508 / S288c)</name>
    <name type="common">Baker's yeast</name>
    <dbReference type="NCBI Taxonomy" id="559292"/>
    <lineage>
        <taxon>Eukaryota</taxon>
        <taxon>Fungi</taxon>
        <taxon>Dikarya</taxon>
        <taxon>Ascomycota</taxon>
        <taxon>Saccharomycotina</taxon>
        <taxon>Saccharomycetes</taxon>
        <taxon>Saccharomycetales</taxon>
        <taxon>Saccharomycetaceae</taxon>
        <taxon>Saccharomyces</taxon>
    </lineage>
</organism>